<comment type="function">
    <text evidence="1">Catalyzes the initial step of the lipid cycle reactions in the biosynthesis of the cell wall peptidoglycan: transfers peptidoglycan precursor phospho-MurNAc-pentapeptide from UDP-MurNAc-pentapeptide onto the lipid carrier undecaprenyl phosphate, yielding undecaprenyl-pyrophosphoryl-MurNAc-pentapeptide, known as lipid I.</text>
</comment>
<comment type="catalytic activity">
    <reaction evidence="1">
        <text>UDP-N-acetyl-alpha-D-muramoyl-L-alanyl-gamma-D-glutamyl-meso-2,6-diaminopimeloyl-D-alanyl-D-alanine + di-trans,octa-cis-undecaprenyl phosphate = di-trans,octa-cis-undecaprenyl diphospho-N-acetyl-alpha-D-muramoyl-L-alanyl-D-glutamyl-meso-2,6-diaminopimeloyl-D-alanyl-D-alanine + UMP</text>
        <dbReference type="Rhea" id="RHEA:28386"/>
        <dbReference type="ChEBI" id="CHEBI:57865"/>
        <dbReference type="ChEBI" id="CHEBI:60392"/>
        <dbReference type="ChEBI" id="CHEBI:61386"/>
        <dbReference type="ChEBI" id="CHEBI:61387"/>
        <dbReference type="EC" id="2.7.8.13"/>
    </reaction>
</comment>
<comment type="cofactor">
    <cofactor evidence="1">
        <name>Mg(2+)</name>
        <dbReference type="ChEBI" id="CHEBI:18420"/>
    </cofactor>
</comment>
<comment type="pathway">
    <text evidence="1">Cell wall biogenesis; peptidoglycan biosynthesis.</text>
</comment>
<comment type="subcellular location">
    <subcellularLocation>
        <location evidence="1">Cell inner membrane</location>
        <topology evidence="1">Multi-pass membrane protein</topology>
    </subcellularLocation>
</comment>
<comment type="similarity">
    <text evidence="1">Belongs to the glycosyltransferase 4 family. MraY subfamily.</text>
</comment>
<name>MRAY_METPB</name>
<protein>
    <recommendedName>
        <fullName evidence="1">Phospho-N-acetylmuramoyl-pentapeptide-transferase</fullName>
        <ecNumber evidence="1">2.7.8.13</ecNumber>
    </recommendedName>
    <alternativeName>
        <fullName evidence="1">UDP-MurNAc-pentapeptide phosphotransferase</fullName>
    </alternativeName>
</protein>
<organism>
    <name type="scientific">Methylorubrum populi (strain ATCC BAA-705 / NCIMB 13946 / BJ001)</name>
    <name type="common">Methylobacterium populi</name>
    <dbReference type="NCBI Taxonomy" id="441620"/>
    <lineage>
        <taxon>Bacteria</taxon>
        <taxon>Pseudomonadati</taxon>
        <taxon>Pseudomonadota</taxon>
        <taxon>Alphaproteobacteria</taxon>
        <taxon>Hyphomicrobiales</taxon>
        <taxon>Methylobacteriaceae</taxon>
        <taxon>Methylorubrum</taxon>
    </lineage>
</organism>
<reference key="1">
    <citation type="submission" date="2008-04" db="EMBL/GenBank/DDBJ databases">
        <title>Complete sequence of chromosome of Methylobacterium populi BJ001.</title>
        <authorList>
            <consortium name="US DOE Joint Genome Institute"/>
            <person name="Copeland A."/>
            <person name="Lucas S."/>
            <person name="Lapidus A."/>
            <person name="Glavina del Rio T."/>
            <person name="Dalin E."/>
            <person name="Tice H."/>
            <person name="Bruce D."/>
            <person name="Goodwin L."/>
            <person name="Pitluck S."/>
            <person name="Chertkov O."/>
            <person name="Brettin T."/>
            <person name="Detter J.C."/>
            <person name="Han C."/>
            <person name="Kuske C.R."/>
            <person name="Schmutz J."/>
            <person name="Larimer F."/>
            <person name="Land M."/>
            <person name="Hauser L."/>
            <person name="Kyrpides N."/>
            <person name="Mikhailova N."/>
            <person name="Marx C."/>
            <person name="Richardson P."/>
        </authorList>
    </citation>
    <scope>NUCLEOTIDE SEQUENCE [LARGE SCALE GENOMIC DNA]</scope>
    <source>
        <strain>ATCC BAA-705 / NCIMB 13946 / BJ001</strain>
    </source>
</reference>
<keyword id="KW-0131">Cell cycle</keyword>
<keyword id="KW-0132">Cell division</keyword>
<keyword id="KW-0997">Cell inner membrane</keyword>
<keyword id="KW-1003">Cell membrane</keyword>
<keyword id="KW-0133">Cell shape</keyword>
<keyword id="KW-0961">Cell wall biogenesis/degradation</keyword>
<keyword id="KW-0460">Magnesium</keyword>
<keyword id="KW-0472">Membrane</keyword>
<keyword id="KW-0479">Metal-binding</keyword>
<keyword id="KW-0573">Peptidoglycan synthesis</keyword>
<keyword id="KW-0808">Transferase</keyword>
<keyword id="KW-0812">Transmembrane</keyword>
<keyword id="KW-1133">Transmembrane helix</keyword>
<sequence>MLFLLSELSGTLTPLNVFRYITFRTGGALFTAGFFVFWFGPWIISLLRLRQGKGQPIREDGPATHLTKRGTPTMGGLMILAGAVVSILLWTNPRNHYVWVTLAVTLGFGAIGFYDDYLKVTKQSHKGFSGRFRLLLEFAIAGAACLLISIYSPAGLQNQLAFPVFKDALLNLGWFWVPFAAFVIVGAGNAVNITDGLDGLAIVPVMIACGTFGVIAYLVGNSFTAGYLQVNYVRDTGELAVVCGAVIGAGLGFLWFNAPPAQIFMGDTGSLALGGLLGAIAVAAKHEIVLAIVGGLFVLEIMSVIIQVASFKLTGKRVFRMAPIHHHFEQKGWKEPQVVIRFWIIAVILALVGLATLKLR</sequence>
<feature type="chain" id="PRO_1000090643" description="Phospho-N-acetylmuramoyl-pentapeptide-transferase">
    <location>
        <begin position="1"/>
        <end position="360"/>
    </location>
</feature>
<feature type="transmembrane region" description="Helical" evidence="1">
    <location>
        <begin position="27"/>
        <end position="47"/>
    </location>
</feature>
<feature type="transmembrane region" description="Helical" evidence="1">
    <location>
        <begin position="70"/>
        <end position="90"/>
    </location>
</feature>
<feature type="transmembrane region" description="Helical" evidence="1">
    <location>
        <begin position="98"/>
        <end position="118"/>
    </location>
</feature>
<feature type="transmembrane region" description="Helical" evidence="1">
    <location>
        <begin position="134"/>
        <end position="154"/>
    </location>
</feature>
<feature type="transmembrane region" description="Helical" evidence="1">
    <location>
        <begin position="168"/>
        <end position="188"/>
    </location>
</feature>
<feature type="transmembrane region" description="Helical" evidence="1">
    <location>
        <begin position="199"/>
        <end position="219"/>
    </location>
</feature>
<feature type="transmembrane region" description="Helical" evidence="1">
    <location>
        <begin position="239"/>
        <end position="259"/>
    </location>
</feature>
<feature type="transmembrane region" description="Helical" evidence="1">
    <location>
        <begin position="263"/>
        <end position="283"/>
    </location>
</feature>
<feature type="transmembrane region" description="Helical" evidence="1">
    <location>
        <begin position="288"/>
        <end position="308"/>
    </location>
</feature>
<feature type="transmembrane region" description="Helical" evidence="1">
    <location>
        <begin position="337"/>
        <end position="357"/>
    </location>
</feature>
<proteinExistence type="inferred from homology"/>
<accession>B1Z8W9</accession>
<dbReference type="EC" id="2.7.8.13" evidence="1"/>
<dbReference type="EMBL" id="CP001029">
    <property type="protein sequence ID" value="ACB83269.1"/>
    <property type="molecule type" value="Genomic_DNA"/>
</dbReference>
<dbReference type="RefSeq" id="WP_012456865.1">
    <property type="nucleotide sequence ID" value="NC_010725.1"/>
</dbReference>
<dbReference type="SMR" id="B1Z8W9"/>
<dbReference type="STRING" id="441620.Mpop_5175"/>
<dbReference type="KEGG" id="mpo:Mpop_5175"/>
<dbReference type="eggNOG" id="COG0472">
    <property type="taxonomic scope" value="Bacteria"/>
</dbReference>
<dbReference type="HOGENOM" id="CLU_023982_0_0_5"/>
<dbReference type="OrthoDB" id="9805475at2"/>
<dbReference type="UniPathway" id="UPA00219"/>
<dbReference type="Proteomes" id="UP000007136">
    <property type="component" value="Chromosome"/>
</dbReference>
<dbReference type="GO" id="GO:0005886">
    <property type="term" value="C:plasma membrane"/>
    <property type="evidence" value="ECO:0007669"/>
    <property type="project" value="UniProtKB-SubCell"/>
</dbReference>
<dbReference type="GO" id="GO:0046872">
    <property type="term" value="F:metal ion binding"/>
    <property type="evidence" value="ECO:0007669"/>
    <property type="project" value="UniProtKB-KW"/>
</dbReference>
<dbReference type="GO" id="GO:0008963">
    <property type="term" value="F:phospho-N-acetylmuramoyl-pentapeptide-transferase activity"/>
    <property type="evidence" value="ECO:0007669"/>
    <property type="project" value="UniProtKB-UniRule"/>
</dbReference>
<dbReference type="GO" id="GO:0051992">
    <property type="term" value="F:UDP-N-acetylmuramoyl-L-alanyl-D-glutamyl-meso-2,6-diaminopimelyl-D-alanyl-D-alanine:undecaprenyl-phosphate transferase activity"/>
    <property type="evidence" value="ECO:0007669"/>
    <property type="project" value="RHEA"/>
</dbReference>
<dbReference type="GO" id="GO:0051301">
    <property type="term" value="P:cell division"/>
    <property type="evidence" value="ECO:0007669"/>
    <property type="project" value="UniProtKB-KW"/>
</dbReference>
<dbReference type="GO" id="GO:0071555">
    <property type="term" value="P:cell wall organization"/>
    <property type="evidence" value="ECO:0007669"/>
    <property type="project" value="UniProtKB-KW"/>
</dbReference>
<dbReference type="GO" id="GO:0009252">
    <property type="term" value="P:peptidoglycan biosynthetic process"/>
    <property type="evidence" value="ECO:0007669"/>
    <property type="project" value="UniProtKB-UniRule"/>
</dbReference>
<dbReference type="GO" id="GO:0008360">
    <property type="term" value="P:regulation of cell shape"/>
    <property type="evidence" value="ECO:0007669"/>
    <property type="project" value="UniProtKB-KW"/>
</dbReference>
<dbReference type="CDD" id="cd06852">
    <property type="entry name" value="GT_MraY"/>
    <property type="match status" value="1"/>
</dbReference>
<dbReference type="HAMAP" id="MF_00038">
    <property type="entry name" value="MraY"/>
    <property type="match status" value="1"/>
</dbReference>
<dbReference type="InterPro" id="IPR000715">
    <property type="entry name" value="Glycosyl_transferase_4"/>
</dbReference>
<dbReference type="InterPro" id="IPR003524">
    <property type="entry name" value="PNAcMuramoyl-5peptid_Trfase"/>
</dbReference>
<dbReference type="InterPro" id="IPR018480">
    <property type="entry name" value="PNAcMuramoyl-5peptid_Trfase_CS"/>
</dbReference>
<dbReference type="NCBIfam" id="TIGR00445">
    <property type="entry name" value="mraY"/>
    <property type="match status" value="1"/>
</dbReference>
<dbReference type="PANTHER" id="PTHR22926">
    <property type="entry name" value="PHOSPHO-N-ACETYLMURAMOYL-PENTAPEPTIDE-TRANSFERASE"/>
    <property type="match status" value="1"/>
</dbReference>
<dbReference type="PANTHER" id="PTHR22926:SF5">
    <property type="entry name" value="PHOSPHO-N-ACETYLMURAMOYL-PENTAPEPTIDE-TRANSFERASE HOMOLOG"/>
    <property type="match status" value="1"/>
</dbReference>
<dbReference type="Pfam" id="PF00953">
    <property type="entry name" value="Glycos_transf_4"/>
    <property type="match status" value="1"/>
</dbReference>
<dbReference type="Pfam" id="PF10555">
    <property type="entry name" value="MraY_sig1"/>
    <property type="match status" value="1"/>
</dbReference>
<dbReference type="PROSITE" id="PS01347">
    <property type="entry name" value="MRAY_1"/>
    <property type="match status" value="1"/>
</dbReference>
<dbReference type="PROSITE" id="PS01348">
    <property type="entry name" value="MRAY_2"/>
    <property type="match status" value="1"/>
</dbReference>
<gene>
    <name evidence="1" type="primary">mraY</name>
    <name type="ordered locus">Mpop_5175</name>
</gene>
<evidence type="ECO:0000255" key="1">
    <source>
        <dbReference type="HAMAP-Rule" id="MF_00038"/>
    </source>
</evidence>